<accession>A5VR64</accession>
<protein>
    <recommendedName>
        <fullName evidence="1">Cobalt-precorrin-5B C(1)-methyltransferase</fullName>
        <ecNumber evidence="1">2.1.1.195</ecNumber>
    </recommendedName>
    <alternativeName>
        <fullName evidence="1">Cobalt-precorrin-6A synthase</fullName>
    </alternativeName>
</protein>
<evidence type="ECO:0000255" key="1">
    <source>
        <dbReference type="HAMAP-Rule" id="MF_00787"/>
    </source>
</evidence>
<keyword id="KW-0169">Cobalamin biosynthesis</keyword>
<keyword id="KW-0489">Methyltransferase</keyword>
<keyword id="KW-0949">S-adenosyl-L-methionine</keyword>
<keyword id="KW-0808">Transferase</keyword>
<dbReference type="EC" id="2.1.1.195" evidence="1"/>
<dbReference type="EMBL" id="CP000708">
    <property type="protein sequence ID" value="ABQ60320.1"/>
    <property type="molecule type" value="Genomic_DNA"/>
</dbReference>
<dbReference type="RefSeq" id="WP_006012993.1">
    <property type="nucleotide sequence ID" value="NC_009505.1"/>
</dbReference>
<dbReference type="SMR" id="A5VR64"/>
<dbReference type="GeneID" id="45124659"/>
<dbReference type="KEGG" id="bov:BOV_1261"/>
<dbReference type="HOGENOM" id="CLU_041273_0_0_5"/>
<dbReference type="PhylomeDB" id="A5VR64"/>
<dbReference type="UniPathway" id="UPA00148">
    <property type="reaction ID" value="UER00227"/>
</dbReference>
<dbReference type="Proteomes" id="UP000006383">
    <property type="component" value="Chromosome I"/>
</dbReference>
<dbReference type="GO" id="GO:0043780">
    <property type="term" value="F:cobalt-precorrin-5B C1-methyltransferase activity"/>
    <property type="evidence" value="ECO:0007669"/>
    <property type="project" value="RHEA"/>
</dbReference>
<dbReference type="GO" id="GO:0019251">
    <property type="term" value="P:anaerobic cobalamin biosynthetic process"/>
    <property type="evidence" value="ECO:0007669"/>
    <property type="project" value="UniProtKB-UniRule"/>
</dbReference>
<dbReference type="GO" id="GO:0032259">
    <property type="term" value="P:methylation"/>
    <property type="evidence" value="ECO:0007669"/>
    <property type="project" value="UniProtKB-KW"/>
</dbReference>
<dbReference type="Gene3D" id="3.30.2110.10">
    <property type="entry name" value="CbiD-like"/>
    <property type="match status" value="1"/>
</dbReference>
<dbReference type="HAMAP" id="MF_00787">
    <property type="entry name" value="CbiD"/>
    <property type="match status" value="1"/>
</dbReference>
<dbReference type="InterPro" id="IPR002748">
    <property type="entry name" value="CbiD"/>
</dbReference>
<dbReference type="InterPro" id="IPR036074">
    <property type="entry name" value="CbiD_sf"/>
</dbReference>
<dbReference type="NCBIfam" id="TIGR00312">
    <property type="entry name" value="cbiD"/>
    <property type="match status" value="1"/>
</dbReference>
<dbReference type="NCBIfam" id="NF000849">
    <property type="entry name" value="PRK00075.1-1"/>
    <property type="match status" value="1"/>
</dbReference>
<dbReference type="PANTHER" id="PTHR35863">
    <property type="entry name" value="COBALT-PRECORRIN-5B C(1)-METHYLTRANSFERASE"/>
    <property type="match status" value="1"/>
</dbReference>
<dbReference type="PANTHER" id="PTHR35863:SF1">
    <property type="entry name" value="COBALT-PRECORRIN-5B C(1)-METHYLTRANSFERASE"/>
    <property type="match status" value="1"/>
</dbReference>
<dbReference type="Pfam" id="PF01888">
    <property type="entry name" value="CbiD"/>
    <property type="match status" value="1"/>
</dbReference>
<dbReference type="PIRSF" id="PIRSF026782">
    <property type="entry name" value="CbiD"/>
    <property type="match status" value="1"/>
</dbReference>
<dbReference type="SUPFAM" id="SSF111342">
    <property type="entry name" value="CbiD-like"/>
    <property type="match status" value="1"/>
</dbReference>
<proteinExistence type="inferred from homology"/>
<comment type="function">
    <text evidence="1">Catalyzes the methylation of C-1 in cobalt-precorrin-5B to form cobalt-precorrin-6A.</text>
</comment>
<comment type="catalytic activity">
    <reaction evidence="1">
        <text>Co-precorrin-5B + S-adenosyl-L-methionine = Co-precorrin-6A + S-adenosyl-L-homocysteine</text>
        <dbReference type="Rhea" id="RHEA:26285"/>
        <dbReference type="ChEBI" id="CHEBI:57856"/>
        <dbReference type="ChEBI" id="CHEBI:59789"/>
        <dbReference type="ChEBI" id="CHEBI:60063"/>
        <dbReference type="ChEBI" id="CHEBI:60064"/>
        <dbReference type="EC" id="2.1.1.195"/>
    </reaction>
</comment>
<comment type="pathway">
    <text evidence="1">Cofactor biosynthesis; adenosylcobalamin biosynthesis; cob(II)yrinate a,c-diamide from sirohydrochlorin (anaerobic route): step 6/10.</text>
</comment>
<comment type="similarity">
    <text evidence="1">Belongs to the CbiD family.</text>
</comment>
<reference key="1">
    <citation type="journal article" date="2009" name="PLoS ONE">
        <title>Genome degradation in Brucella ovis corresponds with narrowing of its host range and tissue tropism.</title>
        <authorList>
            <person name="Tsolis R.M."/>
            <person name="Seshadri R."/>
            <person name="Santos R.L."/>
            <person name="Sangari F.J."/>
            <person name="Lobo J.M."/>
            <person name="de Jong M.F."/>
            <person name="Ren Q."/>
            <person name="Myers G."/>
            <person name="Brinkac L.M."/>
            <person name="Nelson W.C."/>
            <person name="Deboy R.T."/>
            <person name="Angiuoli S."/>
            <person name="Khouri H."/>
            <person name="Dimitrov G."/>
            <person name="Robinson J.R."/>
            <person name="Mulligan S."/>
            <person name="Walker R.L."/>
            <person name="Elzer P.E."/>
            <person name="Hassan K.A."/>
            <person name="Paulsen I.T."/>
        </authorList>
    </citation>
    <scope>NUCLEOTIDE SEQUENCE [LARGE SCALE GENOMIC DNA]</scope>
    <source>
        <strain>ATCC 25840 / 63/290 / NCTC 10512</strain>
    </source>
</reference>
<name>CBID_BRUO2</name>
<sequence length="368" mass="38615">MNDETTPANKNPEKAELRCGWTTGACATAATKAALTALITGEFPDPVGIILPKGEVPYFQLANEGLGEGYAMAGIVKDAGDDPDVTHGATIISTVYPAPPGTGIIFRAGEGVGTVTREGLAIPPGEAAINPVPRRMMTEICEAICAEYGLPADLVITISVPGGEEIAQKTWNPRLGIIGGISILGTTGVVHPFYCSAWIHSIHRGIDVARAAGQKHVLGATGSTSEDAAQALYNLPDFAILDMGDFAGGVLKYLREHPIDRLTIAGGFAKLTKLAQGALDLHSSRSQVDKGFLWQIAERAGAPADMKERILLANTAMEVLELTQSIGIDIAGPIALEARQTALKTLRGAPVEVEIIVTDRKGNILARV</sequence>
<organism>
    <name type="scientific">Brucella ovis (strain ATCC 25840 / 63/290 / NCTC 10512)</name>
    <dbReference type="NCBI Taxonomy" id="444178"/>
    <lineage>
        <taxon>Bacteria</taxon>
        <taxon>Pseudomonadati</taxon>
        <taxon>Pseudomonadota</taxon>
        <taxon>Alphaproteobacteria</taxon>
        <taxon>Hyphomicrobiales</taxon>
        <taxon>Brucellaceae</taxon>
        <taxon>Brucella/Ochrobactrum group</taxon>
        <taxon>Brucella</taxon>
    </lineage>
</organism>
<gene>
    <name evidence="1" type="primary">cbiD</name>
    <name type="ordered locus">BOV_1261</name>
</gene>
<feature type="chain" id="PRO_1000046849" description="Cobalt-precorrin-5B C(1)-methyltransferase">
    <location>
        <begin position="1"/>
        <end position="368"/>
    </location>
</feature>